<reference key="1">
    <citation type="journal article" date="2011" name="J. Bacteriol.">
        <title>Genome sequence of Thermotoga sp. strain RQ2, a hyperthermophilic bacterium isolated from a geothermally heated region of the seafloor near Ribeira Quente, the Azores.</title>
        <authorList>
            <person name="Swithers K.S."/>
            <person name="DiPippo J.L."/>
            <person name="Bruce D.C."/>
            <person name="Detter C."/>
            <person name="Tapia R."/>
            <person name="Han S."/>
            <person name="Saunders E."/>
            <person name="Goodwin L.A."/>
            <person name="Han J."/>
            <person name="Woyke T."/>
            <person name="Pitluck S."/>
            <person name="Pennacchio L."/>
            <person name="Nolan M."/>
            <person name="Mikhailova N."/>
            <person name="Lykidis A."/>
            <person name="Land M.L."/>
            <person name="Brettin T."/>
            <person name="Stetter K.O."/>
            <person name="Nelson K.E."/>
            <person name="Gogarten J.P."/>
            <person name="Noll K.M."/>
        </authorList>
    </citation>
    <scope>NUCLEOTIDE SEQUENCE [LARGE SCALE GENOMIC DNA]</scope>
    <source>
        <strain>RQ2</strain>
    </source>
</reference>
<keyword id="KW-0028">Amino-acid biosynthesis</keyword>
<keyword id="KW-0100">Branched-chain amino acid biosynthesis</keyword>
<keyword id="KW-0963">Cytoplasm</keyword>
<keyword id="KW-0432">Leucine biosynthesis</keyword>
<keyword id="KW-0464">Manganese</keyword>
<keyword id="KW-0479">Metal-binding</keyword>
<keyword id="KW-0808">Transferase</keyword>
<gene>
    <name evidence="1" type="primary">leuA</name>
    <name type="ordered locus">TRQ2_0384</name>
</gene>
<protein>
    <recommendedName>
        <fullName evidence="1">2-isopropylmalate synthase</fullName>
        <ecNumber evidence="1">2.3.3.13</ecNumber>
    </recommendedName>
    <alternativeName>
        <fullName evidence="1">Alpha-IPM synthase</fullName>
    </alternativeName>
    <alternativeName>
        <fullName evidence="1">Alpha-isopropylmalate synthase</fullName>
    </alternativeName>
</protein>
<name>LEU1_THESQ</name>
<comment type="function">
    <text evidence="1">Catalyzes the condensation of the acetyl group of acetyl-CoA with 3-methyl-2-oxobutanoate (2-ketoisovalerate) to form 3-carboxy-3-hydroxy-4-methylpentanoate (2-isopropylmalate).</text>
</comment>
<comment type="catalytic activity">
    <reaction evidence="1">
        <text>3-methyl-2-oxobutanoate + acetyl-CoA + H2O = (2S)-2-isopropylmalate + CoA + H(+)</text>
        <dbReference type="Rhea" id="RHEA:21524"/>
        <dbReference type="ChEBI" id="CHEBI:1178"/>
        <dbReference type="ChEBI" id="CHEBI:11851"/>
        <dbReference type="ChEBI" id="CHEBI:15377"/>
        <dbReference type="ChEBI" id="CHEBI:15378"/>
        <dbReference type="ChEBI" id="CHEBI:57287"/>
        <dbReference type="ChEBI" id="CHEBI:57288"/>
        <dbReference type="EC" id="2.3.3.13"/>
    </reaction>
</comment>
<comment type="cofactor">
    <cofactor evidence="1">
        <name>Mn(2+)</name>
        <dbReference type="ChEBI" id="CHEBI:29035"/>
    </cofactor>
</comment>
<comment type="pathway">
    <text evidence="1">Amino-acid biosynthesis; L-leucine biosynthesis; L-leucine from 3-methyl-2-oxobutanoate: step 1/4.</text>
</comment>
<comment type="subunit">
    <text evidence="1">Homodimer.</text>
</comment>
<comment type="subcellular location">
    <subcellularLocation>
        <location evidence="1">Cytoplasm</location>
    </subcellularLocation>
</comment>
<comment type="similarity">
    <text evidence="1">Belongs to the alpha-IPM synthase/homocitrate synthase family. LeuA type 1 subfamily.</text>
</comment>
<proteinExistence type="inferred from homology"/>
<organism>
    <name type="scientific">Thermotoga sp. (strain RQ2)</name>
    <dbReference type="NCBI Taxonomy" id="126740"/>
    <lineage>
        <taxon>Bacteria</taxon>
        <taxon>Thermotogati</taxon>
        <taxon>Thermotogota</taxon>
        <taxon>Thermotogae</taxon>
        <taxon>Thermotogales</taxon>
        <taxon>Thermotogaceae</taxon>
        <taxon>Thermotoga</taxon>
    </lineage>
</organism>
<sequence length="513" mass="56805">MRRIKIFDTTLRDGEQSPGASMSIEEKVEMALMLEDLGVDLIEAGFPVSSPVQFEAVKRVASAVQKPIVVGLARCVEKDIDAAYEALKDRPKDKRMIHVFIATSPIHRKYKLRMEKEEILERIRRYVGYAKQFFDLVEFSAEDASRTEVPFLIEAYKTAIEAGATTINVPDTVGYALPDEFGELIKTLREGVPGIENVDLSVHCHNDLGLAVANSLAAVQNGATQVEVTLNGIGERAGNCALEEFVMILKVRKDKLPYETGIKTELIYPASRLLTHITGLIPSRNKPIVGENVFLHESGIHQDGVLKHRETYEIMKPSDIGRSSETLVLGRHSGKHALRKKLETYGIKLDEETFQKVFEKFTELADRKKEVYDDDLFSIVSEVLREPINGYKLVHFHVHTGNTLLPTAAVVLQVGNEKREAAEAGNGPVDAIFKAIDKALGIQPKLEEYIIQAVGTGKNAQGEVKLTLRIDNELYSGRGVSTDIVEASAIAYINAINKYLIAKGLLRKNGGAE</sequence>
<feature type="chain" id="PRO_1000149321" description="2-isopropylmalate synthase">
    <location>
        <begin position="1"/>
        <end position="513"/>
    </location>
</feature>
<feature type="domain" description="Pyruvate carboxyltransferase" evidence="1">
    <location>
        <begin position="4"/>
        <end position="268"/>
    </location>
</feature>
<feature type="region of interest" description="Regulatory domain" evidence="1">
    <location>
        <begin position="392"/>
        <end position="513"/>
    </location>
</feature>
<feature type="binding site" evidence="1">
    <location>
        <position position="13"/>
    </location>
    <ligand>
        <name>Mn(2+)</name>
        <dbReference type="ChEBI" id="CHEBI:29035"/>
    </ligand>
</feature>
<feature type="binding site" evidence="1">
    <location>
        <position position="203"/>
    </location>
    <ligand>
        <name>Mn(2+)</name>
        <dbReference type="ChEBI" id="CHEBI:29035"/>
    </ligand>
</feature>
<feature type="binding site" evidence="1">
    <location>
        <position position="205"/>
    </location>
    <ligand>
        <name>Mn(2+)</name>
        <dbReference type="ChEBI" id="CHEBI:29035"/>
    </ligand>
</feature>
<feature type="binding site" evidence="1">
    <location>
        <position position="239"/>
    </location>
    <ligand>
        <name>Mn(2+)</name>
        <dbReference type="ChEBI" id="CHEBI:29035"/>
    </ligand>
</feature>
<evidence type="ECO:0000255" key="1">
    <source>
        <dbReference type="HAMAP-Rule" id="MF_01025"/>
    </source>
</evidence>
<dbReference type="EC" id="2.3.3.13" evidence="1"/>
<dbReference type="EMBL" id="CP000969">
    <property type="protein sequence ID" value="ACB08740.1"/>
    <property type="molecule type" value="Genomic_DNA"/>
</dbReference>
<dbReference type="RefSeq" id="WP_004081333.1">
    <property type="nucleotide sequence ID" value="NC_010483.1"/>
</dbReference>
<dbReference type="SMR" id="B1L8U2"/>
<dbReference type="KEGG" id="trq:TRQ2_0384"/>
<dbReference type="HOGENOM" id="CLU_022158_0_1_0"/>
<dbReference type="UniPathway" id="UPA00048">
    <property type="reaction ID" value="UER00070"/>
</dbReference>
<dbReference type="Proteomes" id="UP000001687">
    <property type="component" value="Chromosome"/>
</dbReference>
<dbReference type="GO" id="GO:0005737">
    <property type="term" value="C:cytoplasm"/>
    <property type="evidence" value="ECO:0007669"/>
    <property type="project" value="UniProtKB-SubCell"/>
</dbReference>
<dbReference type="GO" id="GO:0003852">
    <property type="term" value="F:2-isopropylmalate synthase activity"/>
    <property type="evidence" value="ECO:0007669"/>
    <property type="project" value="UniProtKB-UniRule"/>
</dbReference>
<dbReference type="GO" id="GO:0003985">
    <property type="term" value="F:acetyl-CoA C-acetyltransferase activity"/>
    <property type="evidence" value="ECO:0007669"/>
    <property type="project" value="UniProtKB-UniRule"/>
</dbReference>
<dbReference type="GO" id="GO:0030145">
    <property type="term" value="F:manganese ion binding"/>
    <property type="evidence" value="ECO:0007669"/>
    <property type="project" value="UniProtKB-UniRule"/>
</dbReference>
<dbReference type="GO" id="GO:0009098">
    <property type="term" value="P:L-leucine biosynthetic process"/>
    <property type="evidence" value="ECO:0007669"/>
    <property type="project" value="UniProtKB-UniRule"/>
</dbReference>
<dbReference type="CDD" id="cd07940">
    <property type="entry name" value="DRE_TIM_IPMS"/>
    <property type="match status" value="1"/>
</dbReference>
<dbReference type="FunFam" id="1.10.238.260:FF:000001">
    <property type="entry name" value="2-isopropylmalate synthase"/>
    <property type="match status" value="1"/>
</dbReference>
<dbReference type="FunFam" id="3.20.20.70:FF:000010">
    <property type="entry name" value="2-isopropylmalate synthase"/>
    <property type="match status" value="1"/>
</dbReference>
<dbReference type="FunFam" id="3.30.160.270:FF:000001">
    <property type="entry name" value="2-isopropylmalate synthase"/>
    <property type="match status" value="1"/>
</dbReference>
<dbReference type="Gene3D" id="1.10.238.260">
    <property type="match status" value="1"/>
</dbReference>
<dbReference type="Gene3D" id="3.30.160.270">
    <property type="match status" value="1"/>
</dbReference>
<dbReference type="Gene3D" id="3.20.20.70">
    <property type="entry name" value="Aldolase class I"/>
    <property type="match status" value="1"/>
</dbReference>
<dbReference type="HAMAP" id="MF_01025">
    <property type="entry name" value="LeuA_type1"/>
    <property type="match status" value="1"/>
</dbReference>
<dbReference type="InterPro" id="IPR050073">
    <property type="entry name" value="2-IPM_HCS-like"/>
</dbReference>
<dbReference type="InterPro" id="IPR013709">
    <property type="entry name" value="2-isopropylmalate_synth_dimer"/>
</dbReference>
<dbReference type="InterPro" id="IPR002034">
    <property type="entry name" value="AIPM/Hcit_synth_CS"/>
</dbReference>
<dbReference type="InterPro" id="IPR013785">
    <property type="entry name" value="Aldolase_TIM"/>
</dbReference>
<dbReference type="InterPro" id="IPR054691">
    <property type="entry name" value="LeuA/HCS_post-cat"/>
</dbReference>
<dbReference type="InterPro" id="IPR036230">
    <property type="entry name" value="LeuA_allosteric_dom_sf"/>
</dbReference>
<dbReference type="InterPro" id="IPR005671">
    <property type="entry name" value="LeuA_bact_synth"/>
</dbReference>
<dbReference type="InterPro" id="IPR000891">
    <property type="entry name" value="PYR_CT"/>
</dbReference>
<dbReference type="NCBIfam" id="TIGR00973">
    <property type="entry name" value="leuA_bact"/>
    <property type="match status" value="1"/>
</dbReference>
<dbReference type="NCBIfam" id="NF002085">
    <property type="entry name" value="PRK00915.1-2"/>
    <property type="match status" value="1"/>
</dbReference>
<dbReference type="NCBIfam" id="NF002086">
    <property type="entry name" value="PRK00915.1-3"/>
    <property type="match status" value="1"/>
</dbReference>
<dbReference type="PANTHER" id="PTHR10277:SF9">
    <property type="entry name" value="2-ISOPROPYLMALATE SYNTHASE 1, CHLOROPLASTIC-RELATED"/>
    <property type="match status" value="1"/>
</dbReference>
<dbReference type="PANTHER" id="PTHR10277">
    <property type="entry name" value="HOMOCITRATE SYNTHASE-RELATED"/>
    <property type="match status" value="1"/>
</dbReference>
<dbReference type="Pfam" id="PF22617">
    <property type="entry name" value="HCS_D2"/>
    <property type="match status" value="1"/>
</dbReference>
<dbReference type="Pfam" id="PF00682">
    <property type="entry name" value="HMGL-like"/>
    <property type="match status" value="1"/>
</dbReference>
<dbReference type="Pfam" id="PF08502">
    <property type="entry name" value="LeuA_dimer"/>
    <property type="match status" value="1"/>
</dbReference>
<dbReference type="SMART" id="SM00917">
    <property type="entry name" value="LeuA_dimer"/>
    <property type="match status" value="1"/>
</dbReference>
<dbReference type="SUPFAM" id="SSF110921">
    <property type="entry name" value="2-isopropylmalate synthase LeuA, allosteric (dimerisation) domain"/>
    <property type="match status" value="1"/>
</dbReference>
<dbReference type="SUPFAM" id="SSF51569">
    <property type="entry name" value="Aldolase"/>
    <property type="match status" value="1"/>
</dbReference>
<dbReference type="PROSITE" id="PS00815">
    <property type="entry name" value="AIPM_HOMOCIT_SYNTH_1"/>
    <property type="match status" value="1"/>
</dbReference>
<dbReference type="PROSITE" id="PS00816">
    <property type="entry name" value="AIPM_HOMOCIT_SYNTH_2"/>
    <property type="match status" value="1"/>
</dbReference>
<dbReference type="PROSITE" id="PS50991">
    <property type="entry name" value="PYR_CT"/>
    <property type="match status" value="1"/>
</dbReference>
<accession>B1L8U2</accession>